<comment type="function">
    <text evidence="1">Could be a mediator in iron transactions between iron acquisition and iron-requiring processes, such as synthesis and/or repair of Fe-S clusters in biosynthetic enzymes.</text>
</comment>
<comment type="subunit">
    <text evidence="1">Monomer.</text>
</comment>
<comment type="similarity">
    <text evidence="1">Belongs to the Fe(2+)-trafficking protein family.</text>
</comment>
<feature type="chain" id="PRO_0000214471" description="Probable Fe(2+)-trafficking protein">
    <location>
        <begin position="1"/>
        <end position="78"/>
    </location>
</feature>
<name>FETP_BUCAP</name>
<sequence>MNRIIFCTFLQKKSEGQDYPPYPGKLGEKIYNQISKIAWKEWKLQQTKLINEEKLNMFNQNDRKKIEKYMKLFLFNNE</sequence>
<organism>
    <name type="scientific">Buchnera aphidicola subsp. Schizaphis graminum (strain Sg)</name>
    <dbReference type="NCBI Taxonomy" id="198804"/>
    <lineage>
        <taxon>Bacteria</taxon>
        <taxon>Pseudomonadati</taxon>
        <taxon>Pseudomonadota</taxon>
        <taxon>Gammaproteobacteria</taxon>
        <taxon>Enterobacterales</taxon>
        <taxon>Erwiniaceae</taxon>
        <taxon>Buchnera</taxon>
    </lineage>
</organism>
<keyword id="KW-0408">Iron</keyword>
<proteinExistence type="inferred from homology"/>
<gene>
    <name type="ordered locus">BUsg_535</name>
</gene>
<evidence type="ECO:0000255" key="1">
    <source>
        <dbReference type="HAMAP-Rule" id="MF_00686"/>
    </source>
</evidence>
<reference key="1">
    <citation type="journal article" date="2002" name="Science">
        <title>50 million years of genomic stasis in endosymbiotic bacteria.</title>
        <authorList>
            <person name="Tamas I."/>
            <person name="Klasson L."/>
            <person name="Canbaeck B."/>
            <person name="Naeslund A.K."/>
            <person name="Eriksson A.-S."/>
            <person name="Wernegreen J.J."/>
            <person name="Sandstroem J.P."/>
            <person name="Moran N.A."/>
            <person name="Andersson S.G.E."/>
        </authorList>
    </citation>
    <scope>NUCLEOTIDE SEQUENCE [LARGE SCALE GENOMIC DNA]</scope>
    <source>
        <strain>Sg</strain>
    </source>
</reference>
<dbReference type="EMBL" id="AE013218">
    <property type="protein sequence ID" value="AAM68076.1"/>
    <property type="molecule type" value="Genomic_DNA"/>
</dbReference>
<dbReference type="RefSeq" id="WP_011054042.1">
    <property type="nucleotide sequence ID" value="NC_004061.1"/>
</dbReference>
<dbReference type="SMR" id="Q8K925"/>
<dbReference type="STRING" id="198804.BUsg_535"/>
<dbReference type="GeneID" id="93004010"/>
<dbReference type="KEGG" id="bas:BUsg_535"/>
<dbReference type="eggNOG" id="COG2924">
    <property type="taxonomic scope" value="Bacteria"/>
</dbReference>
<dbReference type="HOGENOM" id="CLU_170994_0_0_6"/>
<dbReference type="Proteomes" id="UP000000416">
    <property type="component" value="Chromosome"/>
</dbReference>
<dbReference type="GO" id="GO:0005829">
    <property type="term" value="C:cytosol"/>
    <property type="evidence" value="ECO:0007669"/>
    <property type="project" value="TreeGrafter"/>
</dbReference>
<dbReference type="GO" id="GO:0005506">
    <property type="term" value="F:iron ion binding"/>
    <property type="evidence" value="ECO:0007669"/>
    <property type="project" value="UniProtKB-UniRule"/>
</dbReference>
<dbReference type="GO" id="GO:0034599">
    <property type="term" value="P:cellular response to oxidative stress"/>
    <property type="evidence" value="ECO:0007669"/>
    <property type="project" value="TreeGrafter"/>
</dbReference>
<dbReference type="Gene3D" id="1.10.3880.10">
    <property type="entry name" value="Fe(II) trafficking protein YggX"/>
    <property type="match status" value="1"/>
</dbReference>
<dbReference type="HAMAP" id="MF_00686">
    <property type="entry name" value="Fe_traffic_YggX"/>
    <property type="match status" value="1"/>
</dbReference>
<dbReference type="InterPro" id="IPR007457">
    <property type="entry name" value="Fe_traffick_prot_YggX"/>
</dbReference>
<dbReference type="InterPro" id="IPR036766">
    <property type="entry name" value="Fe_traffick_prot_YggX_sf"/>
</dbReference>
<dbReference type="NCBIfam" id="NF003817">
    <property type="entry name" value="PRK05408.1"/>
    <property type="match status" value="1"/>
</dbReference>
<dbReference type="PANTHER" id="PTHR36965">
    <property type="entry name" value="FE(2+)-TRAFFICKING PROTEIN-RELATED"/>
    <property type="match status" value="1"/>
</dbReference>
<dbReference type="PANTHER" id="PTHR36965:SF1">
    <property type="entry name" value="FE(2+)-TRAFFICKING PROTEIN-RELATED"/>
    <property type="match status" value="1"/>
</dbReference>
<dbReference type="Pfam" id="PF04362">
    <property type="entry name" value="Iron_traffic"/>
    <property type="match status" value="1"/>
</dbReference>
<dbReference type="PIRSF" id="PIRSF029827">
    <property type="entry name" value="Fe_traffic_YggX"/>
    <property type="match status" value="1"/>
</dbReference>
<dbReference type="SUPFAM" id="SSF111148">
    <property type="entry name" value="YggX-like"/>
    <property type="match status" value="1"/>
</dbReference>
<protein>
    <recommendedName>
        <fullName evidence="1">Probable Fe(2+)-trafficking protein</fullName>
    </recommendedName>
</protein>
<accession>Q8K925</accession>